<comment type="subcellular location">
    <subcellularLocation>
        <location evidence="1">Secreted</location>
        <location evidence="1">Cell wall</location>
    </subcellularLocation>
</comment>
<sequence>AVNGGPATLPEYQI</sequence>
<evidence type="ECO:0000269" key="1">
    <source>
    </source>
</evidence>
<evidence type="ECO:0000303" key="2">
    <source>
    </source>
</evidence>
<evidence type="ECO:0000305" key="3"/>
<keyword id="KW-0134">Cell wall</keyword>
<keyword id="KW-0903">Direct protein sequencing</keyword>
<keyword id="KW-1185">Reference proteome</keyword>
<keyword id="KW-0964">Secreted</keyword>
<accession>P80779</accession>
<name>CWP02_TOBAC</name>
<reference evidence="3" key="1">
    <citation type="journal article" date="1997" name="J. Biol. Chem.">
        <title>Differential extraction and protein sequencing reveals major differences in patterns of primary cell wall proteins from plants.</title>
        <authorList>
            <person name="Robertson D."/>
            <person name="Mitchell G.P."/>
            <person name="Gilroy J.S."/>
            <person name="Gerrish C."/>
            <person name="Bolwell G.P."/>
            <person name="Slabas A.R."/>
        </authorList>
    </citation>
    <scope>PROTEIN SEQUENCE</scope>
    <scope>SUBCELLULAR LOCATION</scope>
</reference>
<organism>
    <name type="scientific">Nicotiana tabacum</name>
    <name type="common">Common tobacco</name>
    <dbReference type="NCBI Taxonomy" id="4097"/>
    <lineage>
        <taxon>Eukaryota</taxon>
        <taxon>Viridiplantae</taxon>
        <taxon>Streptophyta</taxon>
        <taxon>Embryophyta</taxon>
        <taxon>Tracheophyta</taxon>
        <taxon>Spermatophyta</taxon>
        <taxon>Magnoliopsida</taxon>
        <taxon>eudicotyledons</taxon>
        <taxon>Gunneridae</taxon>
        <taxon>Pentapetalae</taxon>
        <taxon>asterids</taxon>
        <taxon>lamiids</taxon>
        <taxon>Solanales</taxon>
        <taxon>Solanaceae</taxon>
        <taxon>Nicotianoideae</taxon>
        <taxon>Nicotianeae</taxon>
        <taxon>Nicotiana</taxon>
    </lineage>
</organism>
<proteinExistence type="evidence at protein level"/>
<protein>
    <recommendedName>
        <fullName>41 kDa cell wall protein</fullName>
    </recommendedName>
</protein>
<feature type="chain" id="PRO_0000079626" description="41 kDa cell wall protein">
    <location>
        <begin position="1"/>
        <end position="14" status="greater than"/>
    </location>
</feature>
<feature type="non-terminal residue" evidence="2">
    <location>
        <position position="14"/>
    </location>
</feature>
<dbReference type="PaxDb" id="4097-P80779"/>
<dbReference type="Proteomes" id="UP000084051">
    <property type="component" value="Unplaced"/>
</dbReference>
<dbReference type="GO" id="GO:0005576">
    <property type="term" value="C:extracellular region"/>
    <property type="evidence" value="ECO:0007669"/>
    <property type="project" value="UniProtKB-KW"/>
</dbReference>